<name>RMD1_RAT</name>
<accession>Q4G069</accession>
<keyword id="KW-0963">Cytoplasm</keyword>
<keyword id="KW-0206">Cytoskeleton</keyword>
<keyword id="KW-0493">Microtubule</keyword>
<keyword id="KW-1185">Reference proteome</keyword>
<keyword id="KW-0677">Repeat</keyword>
<keyword id="KW-0802">TPR repeat</keyword>
<proteinExistence type="evidence at transcript level"/>
<comment type="subunit">
    <text evidence="1">Interacts with microtubules.</text>
</comment>
<comment type="subcellular location">
    <subcellularLocation>
        <location evidence="1">Cytoplasm</location>
    </subcellularLocation>
    <subcellularLocation>
        <location evidence="1">Cytoplasm</location>
        <location evidence="1">Cytoskeleton</location>
        <location evidence="1">Spindle</location>
    </subcellularLocation>
    <subcellularLocation>
        <location evidence="1">Cytoplasm</location>
        <location evidence="1">Cytoskeleton</location>
        <location evidence="1">Spindle pole</location>
    </subcellularLocation>
    <text evidence="1">In interphase localizes in the cytoplasm, and during mitosis localizes to the spindle microtubules and spindle poles.</text>
</comment>
<comment type="similarity">
    <text evidence="3">Belongs to the RMDN family.</text>
</comment>
<dbReference type="EMBL" id="BC098713">
    <property type="protein sequence ID" value="AAH98713.1"/>
    <property type="molecule type" value="mRNA"/>
</dbReference>
<dbReference type="RefSeq" id="NP_001026833.1">
    <property type="nucleotide sequence ID" value="NM_001031663.1"/>
</dbReference>
<dbReference type="SMR" id="Q4G069"/>
<dbReference type="BioGRID" id="271727">
    <property type="interactions" value="1"/>
</dbReference>
<dbReference type="FunCoup" id="Q4G069">
    <property type="interactions" value="2598"/>
</dbReference>
<dbReference type="STRING" id="10116.ENSRNOP00000071718"/>
<dbReference type="iPTMnet" id="Q4G069"/>
<dbReference type="PhosphoSitePlus" id="Q4G069"/>
<dbReference type="jPOST" id="Q4G069"/>
<dbReference type="PaxDb" id="10116-ENSRNOP00000030229"/>
<dbReference type="Ensembl" id="ENSRNOT00000036050.5">
    <property type="protein sequence ID" value="ENSRNOP00000030229.3"/>
    <property type="gene ID" value="ENSRNOG00000025145.5"/>
</dbReference>
<dbReference type="GeneID" id="500419"/>
<dbReference type="KEGG" id="rno:500419"/>
<dbReference type="UCSC" id="RGD:1563085">
    <property type="organism name" value="rat"/>
</dbReference>
<dbReference type="AGR" id="RGD:1563085"/>
<dbReference type="CTD" id="51115"/>
<dbReference type="RGD" id="1563085">
    <property type="gene designation" value="Rmdn1"/>
</dbReference>
<dbReference type="eggNOG" id="ENOG502QSJV">
    <property type="taxonomic scope" value="Eukaryota"/>
</dbReference>
<dbReference type="GeneTree" id="ENSGT00950000182992"/>
<dbReference type="HOGENOM" id="CLU_046369_1_1_1"/>
<dbReference type="InParanoid" id="Q4G069"/>
<dbReference type="OrthoDB" id="63340at9989"/>
<dbReference type="PhylomeDB" id="Q4G069"/>
<dbReference type="TreeFam" id="TF315854"/>
<dbReference type="PRO" id="PR:Q4G069"/>
<dbReference type="Proteomes" id="UP000002494">
    <property type="component" value="Chromosome 5"/>
</dbReference>
<dbReference type="Bgee" id="ENSRNOG00000025145">
    <property type="expression patterns" value="Expressed in heart and 19 other cell types or tissues"/>
</dbReference>
<dbReference type="ExpressionAtlas" id="Q4G069">
    <property type="expression patterns" value="baseline and differential"/>
</dbReference>
<dbReference type="GO" id="GO:0005737">
    <property type="term" value="C:cytoplasm"/>
    <property type="evidence" value="ECO:0000318"/>
    <property type="project" value="GO_Central"/>
</dbReference>
<dbReference type="GO" id="GO:0005739">
    <property type="term" value="C:mitochondrion"/>
    <property type="evidence" value="ECO:0000318"/>
    <property type="project" value="GO_Central"/>
</dbReference>
<dbReference type="GO" id="GO:0097431">
    <property type="term" value="C:mitotic spindle pole"/>
    <property type="evidence" value="ECO:0000266"/>
    <property type="project" value="RGD"/>
</dbReference>
<dbReference type="GO" id="GO:0005876">
    <property type="term" value="C:spindle microtubule"/>
    <property type="evidence" value="ECO:0000266"/>
    <property type="project" value="RGD"/>
</dbReference>
<dbReference type="GO" id="GO:0008017">
    <property type="term" value="F:microtubule binding"/>
    <property type="evidence" value="ECO:0000266"/>
    <property type="project" value="RGD"/>
</dbReference>
<dbReference type="FunFam" id="1.25.40.10:FF:002154">
    <property type="entry name" value="regulator of microtubule dynamics protein 1"/>
    <property type="match status" value="1"/>
</dbReference>
<dbReference type="Gene3D" id="1.25.40.10">
    <property type="entry name" value="Tetratricopeptide repeat domain"/>
    <property type="match status" value="1"/>
</dbReference>
<dbReference type="InterPro" id="IPR049039">
    <property type="entry name" value="RMD1-3_a_helical_rpt"/>
</dbReference>
<dbReference type="InterPro" id="IPR011990">
    <property type="entry name" value="TPR-like_helical_dom_sf"/>
</dbReference>
<dbReference type="PANTHER" id="PTHR16056">
    <property type="entry name" value="REGULATOR OF MICROTUBULE DYNAMICS PROTEIN"/>
    <property type="match status" value="1"/>
</dbReference>
<dbReference type="PANTHER" id="PTHR16056:SF16">
    <property type="entry name" value="REGULATOR OF MICROTUBULE DYNAMICS PROTEIN 1"/>
    <property type="match status" value="1"/>
</dbReference>
<dbReference type="Pfam" id="PF21033">
    <property type="entry name" value="RMD1-3"/>
    <property type="match status" value="1"/>
</dbReference>
<dbReference type="SUPFAM" id="SSF48452">
    <property type="entry name" value="TPR-like"/>
    <property type="match status" value="1"/>
</dbReference>
<feature type="chain" id="PRO_0000346795" description="Regulator of microtubule dynamics protein 1">
    <location>
        <begin position="1"/>
        <end position="310"/>
    </location>
</feature>
<feature type="repeat" description="TPR 1">
    <location>
        <begin position="168"/>
        <end position="204"/>
    </location>
</feature>
<feature type="repeat" description="TPR 2">
    <location>
        <begin position="222"/>
        <end position="258"/>
    </location>
</feature>
<feature type="modified residue" description="N6-succinyllysine" evidence="2">
    <location>
        <position position="165"/>
    </location>
</feature>
<evidence type="ECO:0000250" key="1"/>
<evidence type="ECO:0000250" key="2">
    <source>
        <dbReference type="UniProtKB" id="Q9DCV4"/>
    </source>
</evidence>
<evidence type="ECO:0000305" key="3"/>
<reference key="1">
    <citation type="journal article" date="2004" name="Genome Res.">
        <title>The status, quality, and expansion of the NIH full-length cDNA project: the Mammalian Gene Collection (MGC).</title>
        <authorList>
            <consortium name="The MGC Project Team"/>
        </authorList>
    </citation>
    <scope>NUCLEOTIDE SEQUENCE [LARGE SCALE MRNA]</scope>
    <source>
        <tissue>Liver</tissue>
    </source>
</reference>
<protein>
    <recommendedName>
        <fullName>Regulator of microtubule dynamics protein 1</fullName>
        <shortName>RMD-1</shortName>
    </recommendedName>
    <alternativeName>
        <fullName>Protein FAM82B</fullName>
    </alternativeName>
</protein>
<sequence>MALSSRLWRLLPLLRGAEQSVCQLARSWGSGGRCGTWGFRGSEVTGNTRAFKRGLLFSALSYLGFETYQVISQAAVVHATAKVEEILEQADYLYESGETEKLYQLLTQYKESEDVELLWRLARASRDIAQLCKTSEEEKKVLLYEALEYAKRALEKKGSSFAAHKWYAICISDVGDYEGIKVKIANAYVIKEHFEKAIELNPKDATSIHLMGIWCYTFAEMPWYQRRIAEVLFANPPSSTYEEALKYFHRAEEVDPNFYSKNLLLLGKTYLKLNNKKLAAFWLVKAKSYPAHTEEDKQIQTEAAQLLTGL</sequence>
<gene>
    <name type="primary">Rmdn1</name>
    <name type="synonym">Fam82b</name>
</gene>
<organism>
    <name type="scientific">Rattus norvegicus</name>
    <name type="common">Rat</name>
    <dbReference type="NCBI Taxonomy" id="10116"/>
    <lineage>
        <taxon>Eukaryota</taxon>
        <taxon>Metazoa</taxon>
        <taxon>Chordata</taxon>
        <taxon>Craniata</taxon>
        <taxon>Vertebrata</taxon>
        <taxon>Euteleostomi</taxon>
        <taxon>Mammalia</taxon>
        <taxon>Eutheria</taxon>
        <taxon>Euarchontoglires</taxon>
        <taxon>Glires</taxon>
        <taxon>Rodentia</taxon>
        <taxon>Myomorpha</taxon>
        <taxon>Muroidea</taxon>
        <taxon>Muridae</taxon>
        <taxon>Murinae</taxon>
        <taxon>Rattus</taxon>
    </lineage>
</organism>